<keyword id="KW-0903">Direct protein sequencing</keyword>
<keyword id="KW-0304">Gas vesicle</keyword>
<dbReference type="EMBL" id="AJ238351">
    <property type="protein sequence ID" value="CAB59555.1"/>
    <property type="molecule type" value="Genomic_DNA"/>
</dbReference>
<dbReference type="EMBL" id="AJ132354">
    <property type="protein sequence ID" value="CAB59543.1"/>
    <property type="molecule type" value="Genomic_DNA"/>
</dbReference>
<dbReference type="EMBL" id="AJ132354">
    <property type="protein sequence ID" value="CAB59544.1"/>
    <property type="molecule type" value="Genomic_DNA"/>
</dbReference>
<dbReference type="EMBL" id="AJ132357">
    <property type="protein sequence ID" value="CAB59548.1"/>
    <property type="molecule type" value="Genomic_DNA"/>
</dbReference>
<dbReference type="EMBL" id="AJ132358">
    <property type="protein sequence ID" value="CAB59551.1"/>
    <property type="molecule type" value="Genomic_DNA"/>
</dbReference>
<dbReference type="EMBL" id="AJ132358">
    <property type="protein sequence ID" value="CAB59552.1"/>
    <property type="molecule type" value="Genomic_DNA"/>
</dbReference>
<dbReference type="EMBL" id="AJ253125">
    <property type="protein sequence ID" value="CAB59559.1"/>
    <property type="molecule type" value="Genomic_DNA"/>
</dbReference>
<dbReference type="EMBL" id="AJ253127">
    <property type="protein sequence ID" value="CAB59562.1"/>
    <property type="molecule type" value="Genomic_DNA"/>
</dbReference>
<dbReference type="SMR" id="P0A3G1"/>
<dbReference type="GeneID" id="77287376"/>
<dbReference type="OrthoDB" id="284387at2"/>
<dbReference type="GO" id="GO:0033172">
    <property type="term" value="C:gas vesicle shell"/>
    <property type="evidence" value="ECO:0007669"/>
    <property type="project" value="UniProtKB-UniRule"/>
</dbReference>
<dbReference type="GO" id="GO:0012506">
    <property type="term" value="C:vesicle membrane"/>
    <property type="evidence" value="ECO:0007669"/>
    <property type="project" value="InterPro"/>
</dbReference>
<dbReference type="GO" id="GO:0005198">
    <property type="term" value="F:structural molecule activity"/>
    <property type="evidence" value="ECO:0007669"/>
    <property type="project" value="InterPro"/>
</dbReference>
<dbReference type="HAMAP" id="MF_00576">
    <property type="entry name" value="Gas_vesicle_A"/>
    <property type="match status" value="1"/>
</dbReference>
<dbReference type="InterPro" id="IPR000638">
    <property type="entry name" value="Gas-vesicle_GvpA-like"/>
</dbReference>
<dbReference type="InterPro" id="IPR047870">
    <property type="entry name" value="Gas_vesicle_GvpA"/>
</dbReference>
<dbReference type="InterPro" id="IPR050530">
    <property type="entry name" value="GvpA"/>
</dbReference>
<dbReference type="InterPro" id="IPR018493">
    <property type="entry name" value="GvpA-like_CS"/>
</dbReference>
<dbReference type="NCBIfam" id="NF006874">
    <property type="entry name" value="PRK09371.1"/>
    <property type="match status" value="1"/>
</dbReference>
<dbReference type="PANTHER" id="PTHR35344:SF4">
    <property type="entry name" value="GAS VESICLE PROTEIN A1"/>
    <property type="match status" value="1"/>
</dbReference>
<dbReference type="PANTHER" id="PTHR35344">
    <property type="entry name" value="GAS VESICLE STRUCTURAL PROTEIN 2-RELATED"/>
    <property type="match status" value="1"/>
</dbReference>
<dbReference type="Pfam" id="PF00741">
    <property type="entry name" value="Gas_vesicle"/>
    <property type="match status" value="1"/>
</dbReference>
<dbReference type="PROSITE" id="PS00234">
    <property type="entry name" value="GAS_VESICLE_A_1"/>
    <property type="match status" value="1"/>
</dbReference>
<dbReference type="PROSITE" id="PS00669">
    <property type="entry name" value="GAS_VESICLE_A_2"/>
    <property type="match status" value="1"/>
</dbReference>
<proteinExistence type="evidence at protein level"/>
<comment type="function">
    <text evidence="1 2">Gas vesicles are hollow, gas filled proteinaceous nanostructures found in some microorganisms. During planktonic growth they allow positioning of the organism at a favorable depth for light or nutrient acquisition. GvpA forms the protein shell.</text>
</comment>
<comment type="subunit">
    <text evidence="1">The gas vesicle shell is 2 nm thick and consists of a single layer of this protein. It forms helical ribs nearly perpendicular to the long axis of the vesicle.</text>
</comment>
<comment type="subcellular location">
    <subcellularLocation>
        <location evidence="1 2">Gas vesicle shell</location>
    </subcellularLocation>
</comment>
<comment type="similarity">
    <text evidence="1">Belongs to the gas vesicle GvpA family.</text>
</comment>
<name>GVPA_PLARU</name>
<protein>
    <recommendedName>
        <fullName evidence="1">Gas vesicle protein A</fullName>
        <shortName evidence="4">GVP</shortName>
        <shortName evidence="1 3">GvpA</shortName>
    </recommendedName>
</protein>
<accession>P0A3G1</accession>
<accession>P80996</accession>
<accession>Q9R3V0</accession>
<organism>
    <name type="scientific">Planktothrix rubescens</name>
    <dbReference type="NCBI Taxonomy" id="59512"/>
    <lineage>
        <taxon>Bacteria</taxon>
        <taxon>Bacillati</taxon>
        <taxon>Cyanobacteriota</taxon>
        <taxon>Cyanophyceae</taxon>
        <taxon>Oscillatoriophycideae</taxon>
        <taxon>Oscillatoriales</taxon>
        <taxon>Microcoleaceae</taxon>
        <taxon>Planktothrix</taxon>
    </lineage>
</organism>
<feature type="initiator methionine" description="Removed" evidence="2">
    <location>
        <position position="1"/>
    </location>
</feature>
<feature type="chain" id="PRO_0000199987" description="Gas vesicle protein A">
    <location>
        <begin position="2"/>
        <end position="72"/>
    </location>
</feature>
<feature type="sequence conflict" description="In Ref. 3; AA sequence." evidence="5" ref="3">
    <original>E</original>
    <variation>P</variation>
    <location>
        <position position="38"/>
    </location>
</feature>
<feature type="sequence conflict" description="In Ref. 3; AA sequence." evidence="5" ref="3">
    <original>E</original>
    <variation>P</variation>
    <location>
        <position position="43"/>
    </location>
</feature>
<evidence type="ECO:0000255" key="1">
    <source>
        <dbReference type="HAMAP-Rule" id="MF_00576"/>
    </source>
</evidence>
<evidence type="ECO:0000269" key="2">
    <source ref="3"/>
</evidence>
<evidence type="ECO:0000303" key="3">
    <source>
    </source>
</evidence>
<evidence type="ECO:0000303" key="4">
    <source ref="3"/>
</evidence>
<evidence type="ECO:0000305" key="5"/>
<gene>
    <name evidence="1 3" type="primary">gvpA</name>
</gene>
<sequence length="72" mass="7642">MAVEKVNSSSSLAEVIDRILDKGIVIDAWVRVSLVGIELLSIEARIVIASVETYLKYAEAVGLTAQAAVPSV</sequence>
<reference key="1">
    <citation type="journal article" date="1999" name="Microbiology">
        <title>The diversity of gas vesicle genes in Planktothrix rubescens from Lake Zurich.</title>
        <authorList>
            <person name="Beard S.J."/>
            <person name="Handley B.A."/>
            <person name="Hayes P.K."/>
            <person name="Walsby A.E."/>
        </authorList>
    </citation>
    <scope>NUCLEOTIDE SEQUENCE [GENOMIC DNA]</scope>
    <source>
        <strain>BC-Pla 9303</strain>
        <strain>BC-Pla 9316</strain>
        <strain>BC-Pla 9401</strain>
        <strain>BC-Pla 9736</strain>
    </source>
</reference>
<reference key="2">
    <citation type="journal article" date="2000" name="Microbiology">
        <title>Gas vesicle genes in Planktothrix spp. from Nordic lakes: strains with weak gas vesicles possess a longer variant of gvpC.</title>
        <authorList>
            <person name="Beard S.J."/>
            <person name="Davis P.A."/>
            <person name="Iglesias-Rodriguez D."/>
            <person name="Skulberg O.M."/>
            <person name="Walsby A.E."/>
        </authorList>
    </citation>
    <scope>NUCLEOTIDE SEQUENCE [GENOMIC DNA]</scope>
    <source>
        <strain>PCC 7821</strain>
    </source>
</reference>
<reference key="3">
    <citation type="journal article" date="1984" name="J. Gen. Microbiol.">
        <title>Homology of gas vesicle proteins in cyanobacteria and halobacteria.</title>
        <authorList>
            <person name="Walker J.E."/>
            <person name="Hayes P.K."/>
            <person name="Walsby A.E."/>
        </authorList>
    </citation>
    <scope>PROTEIN SEQUENCE OF 2-47</scope>
    <scope>FUNCTION</scope>
    <scope>SUBCELLULAR LOCATION</scope>
    <source>
        <strain>PCC 7821</strain>
    </source>
</reference>